<gene>
    <name evidence="1" type="primary">hisA</name>
    <name type="ordered locus">GAU_0137</name>
</gene>
<keyword id="KW-0028">Amino-acid biosynthesis</keyword>
<keyword id="KW-0963">Cytoplasm</keyword>
<keyword id="KW-0368">Histidine biosynthesis</keyword>
<keyword id="KW-0413">Isomerase</keyword>
<keyword id="KW-1185">Reference proteome</keyword>
<protein>
    <recommendedName>
        <fullName evidence="1">1-(5-phosphoribosyl)-5-[(5-phosphoribosylamino)methylideneamino] imidazole-4-carboxamide isomerase</fullName>
        <ecNumber evidence="1">5.3.1.16</ecNumber>
    </recommendedName>
    <alternativeName>
        <fullName evidence="1">Phosphoribosylformimino-5-aminoimidazole carboxamide ribotide isomerase</fullName>
    </alternativeName>
</protein>
<name>HIS4_GEMAT</name>
<feature type="chain" id="PRO_1000213228" description="1-(5-phosphoribosyl)-5-[(5-phosphoribosylamino)methylideneamino] imidazole-4-carboxamide isomerase">
    <location>
        <begin position="1"/>
        <end position="237"/>
    </location>
</feature>
<feature type="active site" description="Proton acceptor" evidence="1">
    <location>
        <position position="8"/>
    </location>
</feature>
<feature type="active site" description="Proton donor" evidence="1">
    <location>
        <position position="128"/>
    </location>
</feature>
<dbReference type="EC" id="5.3.1.16" evidence="1"/>
<dbReference type="EMBL" id="AP009153">
    <property type="protein sequence ID" value="BAH37179.1"/>
    <property type="molecule type" value="Genomic_DNA"/>
</dbReference>
<dbReference type="RefSeq" id="WP_012681627.1">
    <property type="nucleotide sequence ID" value="NC_012489.1"/>
</dbReference>
<dbReference type="SMR" id="C1A4L9"/>
<dbReference type="STRING" id="379066.GAU_0137"/>
<dbReference type="KEGG" id="gau:GAU_0137"/>
<dbReference type="eggNOG" id="COG0106">
    <property type="taxonomic scope" value="Bacteria"/>
</dbReference>
<dbReference type="HOGENOM" id="CLU_048577_1_1_0"/>
<dbReference type="OrthoDB" id="9807749at2"/>
<dbReference type="UniPathway" id="UPA00031">
    <property type="reaction ID" value="UER00009"/>
</dbReference>
<dbReference type="Proteomes" id="UP000002209">
    <property type="component" value="Chromosome"/>
</dbReference>
<dbReference type="GO" id="GO:0005737">
    <property type="term" value="C:cytoplasm"/>
    <property type="evidence" value="ECO:0007669"/>
    <property type="project" value="UniProtKB-SubCell"/>
</dbReference>
<dbReference type="GO" id="GO:0003949">
    <property type="term" value="F:1-(5-phosphoribosyl)-5-[(5-phosphoribosylamino)methylideneamino]imidazole-4-carboxamide isomerase activity"/>
    <property type="evidence" value="ECO:0007669"/>
    <property type="project" value="UniProtKB-UniRule"/>
</dbReference>
<dbReference type="GO" id="GO:0000105">
    <property type="term" value="P:L-histidine biosynthetic process"/>
    <property type="evidence" value="ECO:0007669"/>
    <property type="project" value="UniProtKB-UniRule"/>
</dbReference>
<dbReference type="GO" id="GO:0000162">
    <property type="term" value="P:L-tryptophan biosynthetic process"/>
    <property type="evidence" value="ECO:0007669"/>
    <property type="project" value="TreeGrafter"/>
</dbReference>
<dbReference type="CDD" id="cd04732">
    <property type="entry name" value="HisA"/>
    <property type="match status" value="1"/>
</dbReference>
<dbReference type="FunFam" id="3.20.20.70:FF:000009">
    <property type="entry name" value="1-(5-phosphoribosyl)-5-[(5-phosphoribosylamino)methylideneamino] imidazole-4-carboxamide isomerase"/>
    <property type="match status" value="1"/>
</dbReference>
<dbReference type="Gene3D" id="3.20.20.70">
    <property type="entry name" value="Aldolase class I"/>
    <property type="match status" value="1"/>
</dbReference>
<dbReference type="HAMAP" id="MF_01014">
    <property type="entry name" value="HisA"/>
    <property type="match status" value="1"/>
</dbReference>
<dbReference type="InterPro" id="IPR013785">
    <property type="entry name" value="Aldolase_TIM"/>
</dbReference>
<dbReference type="InterPro" id="IPR006062">
    <property type="entry name" value="His_biosynth"/>
</dbReference>
<dbReference type="InterPro" id="IPR006063">
    <property type="entry name" value="HisA_bact_arch"/>
</dbReference>
<dbReference type="InterPro" id="IPR044524">
    <property type="entry name" value="Isoase_HisA-like"/>
</dbReference>
<dbReference type="InterPro" id="IPR023016">
    <property type="entry name" value="Isoase_HisA-like_bact"/>
</dbReference>
<dbReference type="InterPro" id="IPR011060">
    <property type="entry name" value="RibuloseP-bd_barrel"/>
</dbReference>
<dbReference type="NCBIfam" id="TIGR00007">
    <property type="entry name" value="1-(5-phosphoribosyl)-5-[(5-phosphoribosylamino)methylideneamino]imidazole-4-carboxamide isomerase"/>
    <property type="match status" value="1"/>
</dbReference>
<dbReference type="PANTHER" id="PTHR43090">
    <property type="entry name" value="1-(5-PHOSPHORIBOSYL)-5-[(5-PHOSPHORIBOSYLAMINO)METHYLIDENEAMINO] IMIDAZOLE-4-CARBOXAMIDE ISOMERASE"/>
    <property type="match status" value="1"/>
</dbReference>
<dbReference type="PANTHER" id="PTHR43090:SF2">
    <property type="entry name" value="1-(5-PHOSPHORIBOSYL)-5-[(5-PHOSPHORIBOSYLAMINO)METHYLIDENEAMINO] IMIDAZOLE-4-CARBOXAMIDE ISOMERASE"/>
    <property type="match status" value="1"/>
</dbReference>
<dbReference type="Pfam" id="PF00977">
    <property type="entry name" value="His_biosynth"/>
    <property type="match status" value="1"/>
</dbReference>
<dbReference type="SUPFAM" id="SSF51366">
    <property type="entry name" value="Ribulose-phoshate binding barrel"/>
    <property type="match status" value="1"/>
</dbReference>
<accession>C1A4L9</accession>
<comment type="catalytic activity">
    <reaction evidence="1">
        <text>1-(5-phospho-beta-D-ribosyl)-5-[(5-phospho-beta-D-ribosylamino)methylideneamino]imidazole-4-carboxamide = 5-[(5-phospho-1-deoxy-D-ribulos-1-ylimino)methylamino]-1-(5-phospho-beta-D-ribosyl)imidazole-4-carboxamide</text>
        <dbReference type="Rhea" id="RHEA:15469"/>
        <dbReference type="ChEBI" id="CHEBI:58435"/>
        <dbReference type="ChEBI" id="CHEBI:58525"/>
        <dbReference type="EC" id="5.3.1.16"/>
    </reaction>
</comment>
<comment type="pathway">
    <text evidence="1">Amino-acid biosynthesis; L-histidine biosynthesis; L-histidine from 5-phospho-alpha-D-ribose 1-diphosphate: step 4/9.</text>
</comment>
<comment type="subcellular location">
    <subcellularLocation>
        <location evidence="1">Cytoplasm</location>
    </subcellularLocation>
</comment>
<comment type="similarity">
    <text evidence="1">Belongs to the HisA/HisF family.</text>
</comment>
<sequence>MIAIPAVDLRGGQCVQLVGGDYEQEQVRLADPLSVARDWSRTGFTRMHIVDLDAATGRGQNHELIRDLLRDSMVPVQVGGGVRDESRIERLIDDGAEWVVVGTRAVEDEDWREEMANRFPGRLIVAADVRERRVVTRGWAETSRLDVIDFVESLRTLPLAGVLVTAVHLEGLMQGTDLPLMEDVAEASAWPVYASGGVTSLEDMRALEHRGLAGAVLGMALYTGVLDARRLAEEYGA</sequence>
<proteinExistence type="inferred from homology"/>
<organism>
    <name type="scientific">Gemmatimonas aurantiaca (strain DSM 14586 / JCM 11422 / NBRC 100505 / T-27)</name>
    <dbReference type="NCBI Taxonomy" id="379066"/>
    <lineage>
        <taxon>Bacteria</taxon>
        <taxon>Pseudomonadati</taxon>
        <taxon>Gemmatimonadota</taxon>
        <taxon>Gemmatimonadia</taxon>
        <taxon>Gemmatimonadales</taxon>
        <taxon>Gemmatimonadaceae</taxon>
        <taxon>Gemmatimonas</taxon>
    </lineage>
</organism>
<reference key="1">
    <citation type="submission" date="2006-03" db="EMBL/GenBank/DDBJ databases">
        <title>Complete genome sequence of Gemmatimonas aurantiaca T-27 that represents a novel phylum Gemmatimonadetes.</title>
        <authorList>
            <person name="Takasaki K."/>
            <person name="Ichikawa N."/>
            <person name="Miura H."/>
            <person name="Matsushita S."/>
            <person name="Watanabe Y."/>
            <person name="Oguchi A."/>
            <person name="Ankai A."/>
            <person name="Yashiro I."/>
            <person name="Takahashi M."/>
            <person name="Terui Y."/>
            <person name="Fukui S."/>
            <person name="Yokoyama H."/>
            <person name="Tanikawa S."/>
            <person name="Hanada S."/>
            <person name="Kamagata Y."/>
            <person name="Fujita N."/>
        </authorList>
    </citation>
    <scope>NUCLEOTIDE SEQUENCE [LARGE SCALE GENOMIC DNA]</scope>
    <source>
        <strain>DSM 14586 / JCM 11422 / NBRC 100505 / T-27</strain>
    </source>
</reference>
<evidence type="ECO:0000255" key="1">
    <source>
        <dbReference type="HAMAP-Rule" id="MF_01014"/>
    </source>
</evidence>